<dbReference type="EMBL" id="AK122760">
    <property type="status" value="NOT_ANNOTATED_CDS"/>
    <property type="molecule type" value="mRNA"/>
</dbReference>
<dbReference type="EMBL" id="AL357673">
    <property type="status" value="NOT_ANNOTATED_CDS"/>
    <property type="molecule type" value="Genomic_DNA"/>
</dbReference>
<dbReference type="CCDS" id="CCDS588.2">
    <molecule id="Q5VXM1-1"/>
</dbReference>
<dbReference type="CCDS" id="CCDS85977.1">
    <molecule id="Q5VXM1-3"/>
</dbReference>
<dbReference type="RefSeq" id="NP_001340584.1">
    <molecule id="Q5VXM1-3"/>
    <property type="nucleotide sequence ID" value="NM_001353655.3"/>
</dbReference>
<dbReference type="RefSeq" id="NP_963840.2">
    <molecule id="Q5VXM1-1"/>
    <property type="nucleotide sequence ID" value="NM_201546.5"/>
</dbReference>
<dbReference type="SMR" id="Q5VXM1"/>
<dbReference type="BioGRID" id="128289">
    <property type="interactions" value="66"/>
</dbReference>
<dbReference type="FunCoup" id="Q5VXM1">
    <property type="interactions" value="1"/>
</dbReference>
<dbReference type="IntAct" id="Q5VXM1">
    <property type="interactions" value="3"/>
</dbReference>
<dbReference type="STRING" id="9606.ENSP00000489959"/>
<dbReference type="GlyCosmos" id="Q5VXM1">
    <property type="glycosylation" value="2 sites, No reported glycans"/>
</dbReference>
<dbReference type="GlyGen" id="Q5VXM1">
    <property type="glycosylation" value="1 site"/>
</dbReference>
<dbReference type="BioMuta" id="CDCP2"/>
<dbReference type="DMDM" id="74747554"/>
<dbReference type="MassIVE" id="Q5VXM1"/>
<dbReference type="PaxDb" id="9606-ENSP00000360381"/>
<dbReference type="PeptideAtlas" id="Q5VXM1"/>
<dbReference type="Antibodypedia" id="33162">
    <property type="antibodies" value="15 antibodies from 9 providers"/>
</dbReference>
<dbReference type="DNASU" id="200008"/>
<dbReference type="Ensembl" id="ENST00000371330.1">
    <molecule id="Q5VXM1-1"/>
    <property type="protein sequence ID" value="ENSP00000360381.1"/>
    <property type="gene ID" value="ENSG00000157211.12"/>
</dbReference>
<dbReference type="Ensembl" id="ENST00000530059.3">
    <molecule id="Q5VXM1-3"/>
    <property type="protein sequence ID" value="ENSP00000489959.1"/>
    <property type="gene ID" value="ENSG00000157211.12"/>
</dbReference>
<dbReference type="GeneID" id="200008"/>
<dbReference type="KEGG" id="hsa:200008"/>
<dbReference type="MANE-Select" id="ENST00000530059.3">
    <property type="protein sequence ID" value="ENSP00000489959.1"/>
    <property type="RefSeq nucleotide sequence ID" value="NM_001353655.3"/>
    <property type="RefSeq protein sequence ID" value="NP_001340584.1"/>
</dbReference>
<dbReference type="UCSC" id="uc001cwv.3">
    <molecule id="Q5VXM1-3"/>
    <property type="organism name" value="human"/>
</dbReference>
<dbReference type="AGR" id="HGNC:27297"/>
<dbReference type="CTD" id="200008"/>
<dbReference type="DisGeNET" id="200008"/>
<dbReference type="GeneCards" id="CDCP2"/>
<dbReference type="HGNC" id="HGNC:27297">
    <property type="gene designation" value="CDCP2"/>
</dbReference>
<dbReference type="HPA" id="ENSG00000157211">
    <property type="expression patterns" value="Not detected"/>
</dbReference>
<dbReference type="MIM" id="612320">
    <property type="type" value="gene"/>
</dbReference>
<dbReference type="neXtProt" id="NX_Q5VXM1"/>
<dbReference type="OpenTargets" id="ENSG00000157211"/>
<dbReference type="PharmGKB" id="PA143485432"/>
<dbReference type="VEuPathDB" id="HostDB:ENSG00000157211"/>
<dbReference type="eggNOG" id="ENOG502QVE6">
    <property type="taxonomic scope" value="Eukaryota"/>
</dbReference>
<dbReference type="GeneTree" id="ENSGT00940000158291"/>
<dbReference type="HOGENOM" id="CLU_015228_7_1_1"/>
<dbReference type="InParanoid" id="Q5VXM1"/>
<dbReference type="OMA" id="QQNVQEY"/>
<dbReference type="OrthoDB" id="10009301at2759"/>
<dbReference type="PAN-GO" id="Q5VXM1">
    <property type="GO annotations" value="0 GO annotations based on evolutionary models"/>
</dbReference>
<dbReference type="PhylomeDB" id="Q5VXM1"/>
<dbReference type="TreeFam" id="TF316506"/>
<dbReference type="PathwayCommons" id="Q5VXM1"/>
<dbReference type="BioGRID-ORCS" id="200008">
    <property type="hits" value="14 hits in 1136 CRISPR screens"/>
</dbReference>
<dbReference type="ChiTaRS" id="CDCP2">
    <property type="organism name" value="human"/>
</dbReference>
<dbReference type="GenomeRNAi" id="200008"/>
<dbReference type="Pharos" id="Q5VXM1">
    <property type="development level" value="Tdark"/>
</dbReference>
<dbReference type="PRO" id="PR:Q5VXM1"/>
<dbReference type="Proteomes" id="UP000005640">
    <property type="component" value="Chromosome 1"/>
</dbReference>
<dbReference type="RNAct" id="Q5VXM1">
    <property type="molecule type" value="protein"/>
</dbReference>
<dbReference type="Bgee" id="ENSG00000157211">
    <property type="expression patterns" value="Expressed in granulocyte and 14 other cell types or tissues"/>
</dbReference>
<dbReference type="ExpressionAtlas" id="Q5VXM1">
    <property type="expression patterns" value="baseline and differential"/>
</dbReference>
<dbReference type="GO" id="GO:0016020">
    <property type="term" value="C:membrane"/>
    <property type="evidence" value="ECO:0007669"/>
    <property type="project" value="UniProtKB-SubCell"/>
</dbReference>
<dbReference type="CDD" id="cd00041">
    <property type="entry name" value="CUB"/>
    <property type="match status" value="3"/>
</dbReference>
<dbReference type="FunFam" id="2.60.120.290:FF:000013">
    <property type="entry name" value="Membrane frizzled-related protein"/>
    <property type="match status" value="3"/>
</dbReference>
<dbReference type="Gene3D" id="2.60.120.290">
    <property type="entry name" value="Spermadhesin, CUB domain"/>
    <property type="match status" value="3"/>
</dbReference>
<dbReference type="Gene3D" id="2.60.40.3210">
    <property type="entry name" value="Zona pellucida, ZP-N domain"/>
    <property type="match status" value="1"/>
</dbReference>
<dbReference type="InterPro" id="IPR000859">
    <property type="entry name" value="CUB_dom"/>
</dbReference>
<dbReference type="InterPro" id="IPR035914">
    <property type="entry name" value="Sperma_CUB_dom_sf"/>
</dbReference>
<dbReference type="InterPro" id="IPR055356">
    <property type="entry name" value="ZP-N"/>
</dbReference>
<dbReference type="PANTHER" id="PTHR24251:SF47">
    <property type="entry name" value="CUB DOMAIN-CONTAINING PROTEIN 2"/>
    <property type="match status" value="1"/>
</dbReference>
<dbReference type="PANTHER" id="PTHR24251">
    <property type="entry name" value="OVOCHYMASE-RELATED"/>
    <property type="match status" value="1"/>
</dbReference>
<dbReference type="Pfam" id="PF00431">
    <property type="entry name" value="CUB"/>
    <property type="match status" value="3"/>
</dbReference>
<dbReference type="Pfam" id="PF23344">
    <property type="entry name" value="ZP-N"/>
    <property type="match status" value="1"/>
</dbReference>
<dbReference type="SMART" id="SM00042">
    <property type="entry name" value="CUB"/>
    <property type="match status" value="3"/>
</dbReference>
<dbReference type="SUPFAM" id="SSF49854">
    <property type="entry name" value="Spermadhesin, CUB domain"/>
    <property type="match status" value="3"/>
</dbReference>
<dbReference type="PROSITE" id="PS01180">
    <property type="entry name" value="CUB"/>
    <property type="match status" value="3"/>
</dbReference>
<gene>
    <name type="primary">CDCP2</name>
</gene>
<organism>
    <name type="scientific">Homo sapiens</name>
    <name type="common">Human</name>
    <dbReference type="NCBI Taxonomy" id="9606"/>
    <lineage>
        <taxon>Eukaryota</taxon>
        <taxon>Metazoa</taxon>
        <taxon>Chordata</taxon>
        <taxon>Craniata</taxon>
        <taxon>Vertebrata</taxon>
        <taxon>Euteleostomi</taxon>
        <taxon>Mammalia</taxon>
        <taxon>Eutheria</taxon>
        <taxon>Euarchontoglires</taxon>
        <taxon>Primates</taxon>
        <taxon>Haplorrhini</taxon>
        <taxon>Catarrhini</taxon>
        <taxon>Hominidae</taxon>
        <taxon>Homo</taxon>
    </lineage>
</organism>
<evidence type="ECO:0000255" key="1"/>
<evidence type="ECO:0000255" key="2">
    <source>
        <dbReference type="PROSITE-ProRule" id="PRU00059"/>
    </source>
</evidence>
<evidence type="ECO:0000305" key="3"/>
<proteinExistence type="evidence at transcript level"/>
<reference key="1">
    <citation type="journal article" date="2004" name="Nat. Genet.">
        <title>Complete sequencing and characterization of 21,243 full-length human cDNAs.</title>
        <authorList>
            <person name="Ota T."/>
            <person name="Suzuki Y."/>
            <person name="Nishikawa T."/>
            <person name="Otsuki T."/>
            <person name="Sugiyama T."/>
            <person name="Irie R."/>
            <person name="Wakamatsu A."/>
            <person name="Hayashi K."/>
            <person name="Sato H."/>
            <person name="Nagai K."/>
            <person name="Kimura K."/>
            <person name="Makita H."/>
            <person name="Sekine M."/>
            <person name="Obayashi M."/>
            <person name="Nishi T."/>
            <person name="Shibahara T."/>
            <person name="Tanaka T."/>
            <person name="Ishii S."/>
            <person name="Yamamoto J."/>
            <person name="Saito K."/>
            <person name="Kawai Y."/>
            <person name="Isono Y."/>
            <person name="Nakamura Y."/>
            <person name="Nagahari K."/>
            <person name="Murakami K."/>
            <person name="Yasuda T."/>
            <person name="Iwayanagi T."/>
            <person name="Wagatsuma M."/>
            <person name="Shiratori A."/>
            <person name="Sudo H."/>
            <person name="Hosoiri T."/>
            <person name="Kaku Y."/>
            <person name="Kodaira H."/>
            <person name="Kondo H."/>
            <person name="Sugawara M."/>
            <person name="Takahashi M."/>
            <person name="Kanda K."/>
            <person name="Yokoi T."/>
            <person name="Furuya T."/>
            <person name="Kikkawa E."/>
            <person name="Omura Y."/>
            <person name="Abe K."/>
            <person name="Kamihara K."/>
            <person name="Katsuta N."/>
            <person name="Sato K."/>
            <person name="Tanikawa M."/>
            <person name="Yamazaki M."/>
            <person name="Ninomiya K."/>
            <person name="Ishibashi T."/>
            <person name="Yamashita H."/>
            <person name="Murakawa K."/>
            <person name="Fujimori K."/>
            <person name="Tanai H."/>
            <person name="Kimata M."/>
            <person name="Watanabe M."/>
            <person name="Hiraoka S."/>
            <person name="Chiba Y."/>
            <person name="Ishida S."/>
            <person name="Ono Y."/>
            <person name="Takiguchi S."/>
            <person name="Watanabe S."/>
            <person name="Yosida M."/>
            <person name="Hotuta T."/>
            <person name="Kusano J."/>
            <person name="Kanehori K."/>
            <person name="Takahashi-Fujii A."/>
            <person name="Hara H."/>
            <person name="Tanase T.-O."/>
            <person name="Nomura Y."/>
            <person name="Togiya S."/>
            <person name="Komai F."/>
            <person name="Hara R."/>
            <person name="Takeuchi K."/>
            <person name="Arita M."/>
            <person name="Imose N."/>
            <person name="Musashino K."/>
            <person name="Yuuki H."/>
            <person name="Oshima A."/>
            <person name="Sasaki N."/>
            <person name="Aotsuka S."/>
            <person name="Yoshikawa Y."/>
            <person name="Matsunawa H."/>
            <person name="Ichihara T."/>
            <person name="Shiohata N."/>
            <person name="Sano S."/>
            <person name="Moriya S."/>
            <person name="Momiyama H."/>
            <person name="Satoh N."/>
            <person name="Takami S."/>
            <person name="Terashima Y."/>
            <person name="Suzuki O."/>
            <person name="Nakagawa S."/>
            <person name="Senoh A."/>
            <person name="Mizoguchi H."/>
            <person name="Goto Y."/>
            <person name="Shimizu F."/>
            <person name="Wakebe H."/>
            <person name="Hishigaki H."/>
            <person name="Watanabe T."/>
            <person name="Sugiyama A."/>
            <person name="Takemoto M."/>
            <person name="Kawakami B."/>
            <person name="Yamazaki M."/>
            <person name="Watanabe K."/>
            <person name="Kumagai A."/>
            <person name="Itakura S."/>
            <person name="Fukuzumi Y."/>
            <person name="Fujimori Y."/>
            <person name="Komiyama M."/>
            <person name="Tashiro H."/>
            <person name="Tanigami A."/>
            <person name="Fujiwara T."/>
            <person name="Ono T."/>
            <person name="Yamada K."/>
            <person name="Fujii Y."/>
            <person name="Ozaki K."/>
            <person name="Hirao M."/>
            <person name="Ohmori Y."/>
            <person name="Kawabata A."/>
            <person name="Hikiji T."/>
            <person name="Kobatake N."/>
            <person name="Inagaki H."/>
            <person name="Ikema Y."/>
            <person name="Okamoto S."/>
            <person name="Okitani R."/>
            <person name="Kawakami T."/>
            <person name="Noguchi S."/>
            <person name="Itoh T."/>
            <person name="Shigeta K."/>
            <person name="Senba T."/>
            <person name="Matsumura K."/>
            <person name="Nakajima Y."/>
            <person name="Mizuno T."/>
            <person name="Morinaga M."/>
            <person name="Sasaki M."/>
            <person name="Togashi T."/>
            <person name="Oyama M."/>
            <person name="Hata H."/>
            <person name="Watanabe M."/>
            <person name="Komatsu T."/>
            <person name="Mizushima-Sugano J."/>
            <person name="Satoh T."/>
            <person name="Shirai Y."/>
            <person name="Takahashi Y."/>
            <person name="Nakagawa K."/>
            <person name="Okumura K."/>
            <person name="Nagase T."/>
            <person name="Nomura N."/>
            <person name="Kikuchi H."/>
            <person name="Masuho Y."/>
            <person name="Yamashita R."/>
            <person name="Nakai K."/>
            <person name="Yada T."/>
            <person name="Nakamura Y."/>
            <person name="Ohara O."/>
            <person name="Isogai T."/>
            <person name="Sugano S."/>
        </authorList>
    </citation>
    <scope>NUCLEOTIDE SEQUENCE [LARGE SCALE MRNA] (ISOFORM 2)</scope>
    <source>
        <tissue>Brain</tissue>
    </source>
</reference>
<reference key="2">
    <citation type="journal article" date="2006" name="Nature">
        <title>The DNA sequence and biological annotation of human chromosome 1.</title>
        <authorList>
            <person name="Gregory S.G."/>
            <person name="Barlow K.F."/>
            <person name="McLay K.E."/>
            <person name="Kaul R."/>
            <person name="Swarbreck D."/>
            <person name="Dunham A."/>
            <person name="Scott C.E."/>
            <person name="Howe K.L."/>
            <person name="Woodfine K."/>
            <person name="Spencer C.C.A."/>
            <person name="Jones M.C."/>
            <person name="Gillson C."/>
            <person name="Searle S."/>
            <person name="Zhou Y."/>
            <person name="Kokocinski F."/>
            <person name="McDonald L."/>
            <person name="Evans R."/>
            <person name="Phillips K."/>
            <person name="Atkinson A."/>
            <person name="Cooper R."/>
            <person name="Jones C."/>
            <person name="Hall R.E."/>
            <person name="Andrews T.D."/>
            <person name="Lloyd C."/>
            <person name="Ainscough R."/>
            <person name="Almeida J.P."/>
            <person name="Ambrose K.D."/>
            <person name="Anderson F."/>
            <person name="Andrew R.W."/>
            <person name="Ashwell R.I.S."/>
            <person name="Aubin K."/>
            <person name="Babbage A.K."/>
            <person name="Bagguley C.L."/>
            <person name="Bailey J."/>
            <person name="Beasley H."/>
            <person name="Bethel G."/>
            <person name="Bird C.P."/>
            <person name="Bray-Allen S."/>
            <person name="Brown J.Y."/>
            <person name="Brown A.J."/>
            <person name="Buckley D."/>
            <person name="Burton J."/>
            <person name="Bye J."/>
            <person name="Carder C."/>
            <person name="Chapman J.C."/>
            <person name="Clark S.Y."/>
            <person name="Clarke G."/>
            <person name="Clee C."/>
            <person name="Cobley V."/>
            <person name="Collier R.E."/>
            <person name="Corby N."/>
            <person name="Coville G.J."/>
            <person name="Davies J."/>
            <person name="Deadman R."/>
            <person name="Dunn M."/>
            <person name="Earthrowl M."/>
            <person name="Ellington A.G."/>
            <person name="Errington H."/>
            <person name="Frankish A."/>
            <person name="Frankland J."/>
            <person name="French L."/>
            <person name="Garner P."/>
            <person name="Garnett J."/>
            <person name="Gay L."/>
            <person name="Ghori M.R.J."/>
            <person name="Gibson R."/>
            <person name="Gilby L.M."/>
            <person name="Gillett W."/>
            <person name="Glithero R.J."/>
            <person name="Grafham D.V."/>
            <person name="Griffiths C."/>
            <person name="Griffiths-Jones S."/>
            <person name="Grocock R."/>
            <person name="Hammond S."/>
            <person name="Harrison E.S.I."/>
            <person name="Hart E."/>
            <person name="Haugen E."/>
            <person name="Heath P.D."/>
            <person name="Holmes S."/>
            <person name="Holt K."/>
            <person name="Howden P.J."/>
            <person name="Hunt A.R."/>
            <person name="Hunt S.E."/>
            <person name="Hunter G."/>
            <person name="Isherwood J."/>
            <person name="James R."/>
            <person name="Johnson C."/>
            <person name="Johnson D."/>
            <person name="Joy A."/>
            <person name="Kay M."/>
            <person name="Kershaw J.K."/>
            <person name="Kibukawa M."/>
            <person name="Kimberley A.M."/>
            <person name="King A."/>
            <person name="Knights A.J."/>
            <person name="Lad H."/>
            <person name="Laird G."/>
            <person name="Lawlor S."/>
            <person name="Leongamornlert D.A."/>
            <person name="Lloyd D.M."/>
            <person name="Loveland J."/>
            <person name="Lovell J."/>
            <person name="Lush M.J."/>
            <person name="Lyne R."/>
            <person name="Martin S."/>
            <person name="Mashreghi-Mohammadi M."/>
            <person name="Matthews L."/>
            <person name="Matthews N.S.W."/>
            <person name="McLaren S."/>
            <person name="Milne S."/>
            <person name="Mistry S."/>
            <person name="Moore M.J.F."/>
            <person name="Nickerson T."/>
            <person name="O'Dell C.N."/>
            <person name="Oliver K."/>
            <person name="Palmeiri A."/>
            <person name="Palmer S.A."/>
            <person name="Parker A."/>
            <person name="Patel D."/>
            <person name="Pearce A.V."/>
            <person name="Peck A.I."/>
            <person name="Pelan S."/>
            <person name="Phelps K."/>
            <person name="Phillimore B.J."/>
            <person name="Plumb R."/>
            <person name="Rajan J."/>
            <person name="Raymond C."/>
            <person name="Rouse G."/>
            <person name="Saenphimmachak C."/>
            <person name="Sehra H.K."/>
            <person name="Sheridan E."/>
            <person name="Shownkeen R."/>
            <person name="Sims S."/>
            <person name="Skuce C.D."/>
            <person name="Smith M."/>
            <person name="Steward C."/>
            <person name="Subramanian S."/>
            <person name="Sycamore N."/>
            <person name="Tracey A."/>
            <person name="Tromans A."/>
            <person name="Van Helmond Z."/>
            <person name="Wall M."/>
            <person name="Wallis J.M."/>
            <person name="White S."/>
            <person name="Whitehead S.L."/>
            <person name="Wilkinson J.E."/>
            <person name="Willey D.L."/>
            <person name="Williams H."/>
            <person name="Wilming L."/>
            <person name="Wray P.W."/>
            <person name="Wu Z."/>
            <person name="Coulson A."/>
            <person name="Vaudin M."/>
            <person name="Sulston J.E."/>
            <person name="Durbin R.M."/>
            <person name="Hubbard T."/>
            <person name="Wooster R."/>
            <person name="Dunham I."/>
            <person name="Carter N.P."/>
            <person name="McVean G."/>
            <person name="Ross M.T."/>
            <person name="Harrow J."/>
            <person name="Olson M.V."/>
            <person name="Beck S."/>
            <person name="Rogers J."/>
            <person name="Bentley D.R."/>
        </authorList>
    </citation>
    <scope>NUCLEOTIDE SEQUENCE [LARGE SCALE GENOMIC DNA]</scope>
</reference>
<protein>
    <recommendedName>
        <fullName>CUB domain-containing protein 2</fullName>
    </recommendedName>
</protein>
<sequence>MLAEWGACLLLAVALLGPGLQAQAMEGVKCGGVLSAPSGNFSSPNFPRLYPYNTECSWLIVVAEGSSVLLTFHAFDLEYHDTCSFDFLEIYNGASPDKGNLLGRFCGKVPPPPFTSSWHVMSVIFHSDKHVASHGFSAGYQKDVCGGVLTGLSGVLTSPEYPNNYPNSMECHWVIRAAGPAHVKLVFVDFQVEGNEECTYDYVAVLGGPGPTRGHHYCGSTRPPTLVSLGHELQVVFKSDFNIGGRGFKAYYFSGECQEVYMAMRGNFSSPQYPSSYPNNIRCHWTIRLPPGYQVKVFFLDLDLEEPNSLTKTCDFDHLAAFDGASEEAPLLGNWCGHHLPPPVTSSHNQLLLLLHTDRSTTRRGFSVAYIGVVPMNVSCSRTDFQILISTQALAPLERTKVYLGSRSCAAQEVGGNLRIQARFDTCGTESQRRNNTSVIVSVLYIDFSAAGREDIHEYEVRCEPRRKEASVHLLSGSHWLGPYAATAEHLQEAPPMDEAEALEGPVSMVAQDTSDIVFLGLCILAGILMVIAIVVLMLL</sequence>
<keyword id="KW-0025">Alternative splicing</keyword>
<keyword id="KW-1015">Disulfide bond</keyword>
<keyword id="KW-0325">Glycoprotein</keyword>
<keyword id="KW-0472">Membrane</keyword>
<keyword id="KW-1185">Reference proteome</keyword>
<keyword id="KW-0677">Repeat</keyword>
<keyword id="KW-0732">Signal</keyword>
<keyword id="KW-0812">Transmembrane</keyword>
<keyword id="KW-1133">Transmembrane helix</keyword>
<comment type="subcellular location">
    <subcellularLocation>
        <location evidence="1">Membrane</location>
        <topology evidence="1">Single-pass type I membrane protein</topology>
    </subcellularLocation>
</comment>
<comment type="alternative products">
    <event type="alternative splicing"/>
    <isoform>
        <id>Q5VXM1-3</id>
        <name>1</name>
        <sequence type="displayed"/>
    </isoform>
    <isoform>
        <id>Q5VXM1-1</id>
        <name>2</name>
        <sequence type="described" ref="VSP_062376 VSP_062377"/>
    </isoform>
</comment>
<name>CDCP2_HUMAN</name>
<feature type="signal peptide" evidence="1">
    <location>
        <begin position="1"/>
        <end position="22"/>
    </location>
</feature>
<feature type="chain" id="PRO_0000305071" description="CUB domain-containing protein 2">
    <location>
        <begin position="23"/>
        <end position="540"/>
    </location>
</feature>
<feature type="topological domain" description="Extracellular" evidence="3">
    <location>
        <begin position="23"/>
        <end position="516"/>
    </location>
</feature>
<feature type="transmembrane region" description="Helical" evidence="1">
    <location>
        <begin position="517"/>
        <end position="537"/>
    </location>
</feature>
<feature type="topological domain" description="Cytoplasmic" evidence="3">
    <location>
        <begin position="538"/>
        <end position="540"/>
    </location>
</feature>
<feature type="domain" description="CUB 1" evidence="2">
    <location>
        <begin position="30"/>
        <end position="143"/>
    </location>
</feature>
<feature type="domain" description="CUB 2" evidence="2">
    <location>
        <begin position="145"/>
        <end position="255"/>
    </location>
</feature>
<feature type="domain" description="CUB 3" evidence="2">
    <location>
        <begin position="257"/>
        <end position="373"/>
    </location>
</feature>
<feature type="glycosylation site" description="N-linked (GlcNAc...) asparagine" evidence="1">
    <location>
        <position position="40"/>
    </location>
</feature>
<feature type="glycosylation site" description="N-linked (GlcNAc...) asparagine" evidence="1">
    <location>
        <position position="267"/>
    </location>
</feature>
<feature type="glycosylation site" description="N-linked (GlcNAc...) asparagine" evidence="1">
    <location>
        <position position="377"/>
    </location>
</feature>
<feature type="glycosylation site" description="N-linked (GlcNAc...) asparagine" evidence="1">
    <location>
        <position position="435"/>
    </location>
</feature>
<feature type="glycosylation site" description="N-linked (GlcNAc...) asparagine" evidence="1">
    <location>
        <position position="436"/>
    </location>
</feature>
<feature type="disulfide bond" evidence="2">
    <location>
        <begin position="30"/>
        <end position="56"/>
    </location>
</feature>
<feature type="disulfide bond" evidence="2">
    <location>
        <begin position="83"/>
        <end position="106"/>
    </location>
</feature>
<feature type="disulfide bond" evidence="2">
    <location>
        <begin position="145"/>
        <end position="171"/>
    </location>
</feature>
<feature type="disulfide bond" evidence="2">
    <location>
        <begin position="198"/>
        <end position="218"/>
    </location>
</feature>
<feature type="disulfide bond" evidence="2">
    <location>
        <begin position="257"/>
        <end position="283"/>
    </location>
</feature>
<feature type="disulfide bond" evidence="2">
    <location>
        <begin position="314"/>
        <end position="336"/>
    </location>
</feature>
<feature type="splice variant" id="VSP_062376" description="In isoform 2.">
    <original>VVPMNVSCSRTDFQILISTQALAPLERTKVYLGSRSCAAQEVGGNLRIQARFDTCGTESQRRNNTSVIVSVLYIDFS</original>
    <variation>GQLGCGSGSTEGEGEALQPQSLQSPSSIPPVCPAPPMNGLLQLLLHWLHPCPLSGPLRLDGTAPACFHYCRASFPSF</variation>
    <location>
        <begin position="373"/>
        <end position="449"/>
    </location>
</feature>
<feature type="splice variant" id="VSP_062377" description="In isoform 2.">
    <location>
        <begin position="450"/>
        <end position="540"/>
    </location>
</feature>
<feature type="sequence variant" id="VAR_035162" description="In dbSNP:rs3766465.">
    <original>G</original>
    <variation>R</variation>
    <location>
        <position position="244"/>
    </location>
</feature>
<accession>Q5VXM1</accession>
<accession>A0A1B0GU47</accession>
<accession>Q6ZWJ3</accession>